<proteinExistence type="inferred from homology"/>
<sequence>MATLLAPAFELPTSLHSLTNLADSRIGAQIVECSDDFFAEAKRMLQFEAPIFVEDKFDDHGKWMDGWETRRKRHAGYDWCIVKLGVAGKIKAVDIDTTFFTGNYPASASLEGCYAPNGNTQEALWQPLLGNSILGPSQHHVFDVQNDAIFTHIRLNIFPDGGVARLRIYGDVQIQITDTDQTLDLLALQNGGRVIAYSDAHFGHPRNLINPGRGVNMGDGWETKRRRAPGFDWCLLALGQAGKIEKIEIDTAHFKGNYPAQVSIQAIYIEDATDPQLIPQSMFWPFLLEAQDMQMDHIHSYLNEVLAHEKVSHIRVNMIPDGGISRVRLWGKVV</sequence>
<reference key="1">
    <citation type="journal article" date="2004" name="Nucleic Acids Res.">
        <title>Unique features revealed by the genome sequence of Acinetobacter sp. ADP1, a versatile and naturally transformation competent bacterium.</title>
        <authorList>
            <person name="Barbe V."/>
            <person name="Vallenet D."/>
            <person name="Fonknechten N."/>
            <person name="Kreimeyer A."/>
            <person name="Oztas S."/>
            <person name="Labarre L."/>
            <person name="Cruveiller S."/>
            <person name="Robert C."/>
            <person name="Duprat S."/>
            <person name="Wincker P."/>
            <person name="Ornston L.N."/>
            <person name="Weissenbach J."/>
            <person name="Marliere P."/>
            <person name="Cohen G.N."/>
            <person name="Medigue C."/>
        </authorList>
    </citation>
    <scope>NUCLEOTIDE SEQUENCE [LARGE SCALE GENOMIC DNA]</scope>
    <source>
        <strain>ATCC 33305 / BD413 / ADP1</strain>
    </source>
</reference>
<organism>
    <name type="scientific">Acinetobacter baylyi (strain ATCC 33305 / BD413 / ADP1)</name>
    <dbReference type="NCBI Taxonomy" id="62977"/>
    <lineage>
        <taxon>Bacteria</taxon>
        <taxon>Pseudomonadati</taxon>
        <taxon>Pseudomonadota</taxon>
        <taxon>Gammaproteobacteria</taxon>
        <taxon>Moraxellales</taxon>
        <taxon>Moraxellaceae</taxon>
        <taxon>Acinetobacter</taxon>
    </lineage>
</organism>
<accession>Q6F6Y1</accession>
<name>ALLC_ACIAD</name>
<feature type="chain" id="PRO_0000205916" description="Probable allantoicase">
    <location>
        <begin position="1"/>
        <end position="334"/>
    </location>
</feature>
<gene>
    <name evidence="1" type="primary">alc</name>
    <name type="ordered locus">ACIAD3541</name>
</gene>
<comment type="catalytic activity">
    <reaction evidence="1">
        <text>allantoate + H2O = (S)-ureidoglycolate + urea</text>
        <dbReference type="Rhea" id="RHEA:11016"/>
        <dbReference type="ChEBI" id="CHEBI:15377"/>
        <dbReference type="ChEBI" id="CHEBI:16199"/>
        <dbReference type="ChEBI" id="CHEBI:17536"/>
        <dbReference type="ChEBI" id="CHEBI:57296"/>
        <dbReference type="EC" id="3.5.3.4"/>
    </reaction>
</comment>
<comment type="pathway">
    <text evidence="1">Nitrogen metabolism; (S)-allantoin degradation; (S)-ureidoglycolate from allantoate (aminidohydrolase route): step 1/1.</text>
</comment>
<comment type="similarity">
    <text evidence="1">Belongs to the allantoicase family.</text>
</comment>
<keyword id="KW-0378">Hydrolase</keyword>
<keyword id="KW-0659">Purine metabolism</keyword>
<dbReference type="EC" id="3.5.3.4" evidence="1"/>
<dbReference type="EMBL" id="CR543861">
    <property type="protein sequence ID" value="CAG70184.1"/>
    <property type="molecule type" value="Genomic_DNA"/>
</dbReference>
<dbReference type="RefSeq" id="WP_004923271.1">
    <property type="nucleotide sequence ID" value="NC_005966.1"/>
</dbReference>
<dbReference type="SMR" id="Q6F6Y1"/>
<dbReference type="STRING" id="202950.GCA_001485005_01672"/>
<dbReference type="GeneID" id="45235717"/>
<dbReference type="KEGG" id="aci:ACIAD3541"/>
<dbReference type="eggNOG" id="COG4266">
    <property type="taxonomic scope" value="Bacteria"/>
</dbReference>
<dbReference type="HOGENOM" id="CLU_038797_1_2_6"/>
<dbReference type="OrthoDB" id="2078334at2"/>
<dbReference type="BioCyc" id="ASP62977:ACIAD_RS16015-MONOMER"/>
<dbReference type="UniPathway" id="UPA00395">
    <property type="reaction ID" value="UER00654"/>
</dbReference>
<dbReference type="Proteomes" id="UP000000430">
    <property type="component" value="Chromosome"/>
</dbReference>
<dbReference type="GO" id="GO:0004037">
    <property type="term" value="F:allantoicase activity"/>
    <property type="evidence" value="ECO:0007669"/>
    <property type="project" value="UniProtKB-UniRule"/>
</dbReference>
<dbReference type="GO" id="GO:0000256">
    <property type="term" value="P:allantoin catabolic process"/>
    <property type="evidence" value="ECO:0007669"/>
    <property type="project" value="UniProtKB-UniRule"/>
</dbReference>
<dbReference type="GO" id="GO:0006144">
    <property type="term" value="P:purine nucleobase metabolic process"/>
    <property type="evidence" value="ECO:0007669"/>
    <property type="project" value="UniProtKB-KW"/>
</dbReference>
<dbReference type="Gene3D" id="2.60.120.260">
    <property type="entry name" value="Galactose-binding domain-like"/>
    <property type="match status" value="2"/>
</dbReference>
<dbReference type="HAMAP" id="MF_00813">
    <property type="entry name" value="Allantoicase"/>
    <property type="match status" value="1"/>
</dbReference>
<dbReference type="InterPro" id="IPR005164">
    <property type="entry name" value="Allantoicase"/>
</dbReference>
<dbReference type="InterPro" id="IPR015908">
    <property type="entry name" value="Allantoicase_dom"/>
</dbReference>
<dbReference type="InterPro" id="IPR008979">
    <property type="entry name" value="Galactose-bd-like_sf"/>
</dbReference>
<dbReference type="NCBIfam" id="TIGR02961">
    <property type="entry name" value="allantoicase"/>
    <property type="match status" value="1"/>
</dbReference>
<dbReference type="PANTHER" id="PTHR12045">
    <property type="entry name" value="ALLANTOICASE"/>
    <property type="match status" value="1"/>
</dbReference>
<dbReference type="PANTHER" id="PTHR12045:SF3">
    <property type="entry name" value="INACTIVE ALLANTOICASE-RELATED"/>
    <property type="match status" value="1"/>
</dbReference>
<dbReference type="Pfam" id="PF03561">
    <property type="entry name" value="Allantoicase"/>
    <property type="match status" value="2"/>
</dbReference>
<dbReference type="PIRSF" id="PIRSF016516">
    <property type="entry name" value="Allantoicase"/>
    <property type="match status" value="1"/>
</dbReference>
<dbReference type="SUPFAM" id="SSF49785">
    <property type="entry name" value="Galactose-binding domain-like"/>
    <property type="match status" value="2"/>
</dbReference>
<protein>
    <recommendedName>
        <fullName evidence="1">Probable allantoicase</fullName>
        <ecNumber evidence="1">3.5.3.4</ecNumber>
    </recommendedName>
    <alternativeName>
        <fullName evidence="1">Allantoate amidinohydrolase</fullName>
    </alternativeName>
</protein>
<evidence type="ECO:0000255" key="1">
    <source>
        <dbReference type="HAMAP-Rule" id="MF_00813"/>
    </source>
</evidence>